<name>RLMH_SHOC1</name>
<accession>Q5WAI7</accession>
<organism>
    <name type="scientific">Shouchella clausii (strain KSM-K16)</name>
    <name type="common">Alkalihalobacillus clausii</name>
    <dbReference type="NCBI Taxonomy" id="66692"/>
    <lineage>
        <taxon>Bacteria</taxon>
        <taxon>Bacillati</taxon>
        <taxon>Bacillota</taxon>
        <taxon>Bacilli</taxon>
        <taxon>Bacillales</taxon>
        <taxon>Bacillaceae</taxon>
        <taxon>Shouchella</taxon>
    </lineage>
</organism>
<dbReference type="EC" id="2.1.1.177" evidence="1"/>
<dbReference type="EMBL" id="AP006627">
    <property type="protein sequence ID" value="BAD66624.1"/>
    <property type="molecule type" value="Genomic_DNA"/>
</dbReference>
<dbReference type="RefSeq" id="WP_011248926.1">
    <property type="nucleotide sequence ID" value="NC_006582.1"/>
</dbReference>
<dbReference type="SMR" id="Q5WAI7"/>
<dbReference type="STRING" id="66692.ABC4093"/>
<dbReference type="KEGG" id="bcl:ABC4093"/>
<dbReference type="eggNOG" id="COG1576">
    <property type="taxonomic scope" value="Bacteria"/>
</dbReference>
<dbReference type="HOGENOM" id="CLU_100552_0_0_9"/>
<dbReference type="OrthoDB" id="9806643at2"/>
<dbReference type="Proteomes" id="UP000001168">
    <property type="component" value="Chromosome"/>
</dbReference>
<dbReference type="GO" id="GO:0005737">
    <property type="term" value="C:cytoplasm"/>
    <property type="evidence" value="ECO:0007669"/>
    <property type="project" value="UniProtKB-SubCell"/>
</dbReference>
<dbReference type="GO" id="GO:0070038">
    <property type="term" value="F:rRNA (pseudouridine-N3-)-methyltransferase activity"/>
    <property type="evidence" value="ECO:0007669"/>
    <property type="project" value="UniProtKB-UniRule"/>
</dbReference>
<dbReference type="CDD" id="cd18081">
    <property type="entry name" value="RlmH-like"/>
    <property type="match status" value="1"/>
</dbReference>
<dbReference type="Gene3D" id="3.40.1280.10">
    <property type="match status" value="1"/>
</dbReference>
<dbReference type="HAMAP" id="MF_00658">
    <property type="entry name" value="23SrRNA_methyltr_H"/>
    <property type="match status" value="1"/>
</dbReference>
<dbReference type="InterPro" id="IPR029028">
    <property type="entry name" value="Alpha/beta_knot_MTases"/>
</dbReference>
<dbReference type="InterPro" id="IPR003742">
    <property type="entry name" value="RlmH-like"/>
</dbReference>
<dbReference type="InterPro" id="IPR029026">
    <property type="entry name" value="tRNA_m1G_MTases_N"/>
</dbReference>
<dbReference type="NCBIfam" id="NF000985">
    <property type="entry name" value="PRK00103.1-3"/>
    <property type="match status" value="1"/>
</dbReference>
<dbReference type="NCBIfam" id="TIGR00246">
    <property type="entry name" value="tRNA_RlmH_YbeA"/>
    <property type="match status" value="1"/>
</dbReference>
<dbReference type="PANTHER" id="PTHR33603">
    <property type="entry name" value="METHYLTRANSFERASE"/>
    <property type="match status" value="1"/>
</dbReference>
<dbReference type="PANTHER" id="PTHR33603:SF1">
    <property type="entry name" value="RIBOSOMAL RNA LARGE SUBUNIT METHYLTRANSFERASE H"/>
    <property type="match status" value="1"/>
</dbReference>
<dbReference type="Pfam" id="PF02590">
    <property type="entry name" value="SPOUT_MTase"/>
    <property type="match status" value="1"/>
</dbReference>
<dbReference type="PIRSF" id="PIRSF004505">
    <property type="entry name" value="MT_bac"/>
    <property type="match status" value="1"/>
</dbReference>
<dbReference type="SUPFAM" id="SSF75217">
    <property type="entry name" value="alpha/beta knot"/>
    <property type="match status" value="1"/>
</dbReference>
<comment type="function">
    <text evidence="1">Specifically methylates the pseudouridine at position 1915 (m3Psi1915) in 23S rRNA.</text>
</comment>
<comment type="catalytic activity">
    <reaction evidence="1">
        <text>pseudouridine(1915) in 23S rRNA + S-adenosyl-L-methionine = N(3)-methylpseudouridine(1915) in 23S rRNA + S-adenosyl-L-homocysteine + H(+)</text>
        <dbReference type="Rhea" id="RHEA:42752"/>
        <dbReference type="Rhea" id="RHEA-COMP:10221"/>
        <dbReference type="Rhea" id="RHEA-COMP:10222"/>
        <dbReference type="ChEBI" id="CHEBI:15378"/>
        <dbReference type="ChEBI" id="CHEBI:57856"/>
        <dbReference type="ChEBI" id="CHEBI:59789"/>
        <dbReference type="ChEBI" id="CHEBI:65314"/>
        <dbReference type="ChEBI" id="CHEBI:74486"/>
        <dbReference type="EC" id="2.1.1.177"/>
    </reaction>
</comment>
<comment type="subunit">
    <text evidence="1">Homodimer.</text>
</comment>
<comment type="subcellular location">
    <subcellularLocation>
        <location evidence="1">Cytoplasm</location>
    </subcellularLocation>
</comment>
<comment type="similarity">
    <text evidence="1">Belongs to the RNA methyltransferase RlmH family.</text>
</comment>
<feature type="chain" id="PRO_0000198089" description="Ribosomal RNA large subunit methyltransferase H">
    <location>
        <begin position="1"/>
        <end position="159"/>
    </location>
</feature>
<feature type="binding site" evidence="1">
    <location>
        <position position="76"/>
    </location>
    <ligand>
        <name>S-adenosyl-L-methionine</name>
        <dbReference type="ChEBI" id="CHEBI:59789"/>
    </ligand>
</feature>
<feature type="binding site" evidence="1">
    <location>
        <position position="108"/>
    </location>
    <ligand>
        <name>S-adenosyl-L-methionine</name>
        <dbReference type="ChEBI" id="CHEBI:59789"/>
    </ligand>
</feature>
<feature type="binding site" evidence="1">
    <location>
        <begin position="127"/>
        <end position="132"/>
    </location>
    <ligand>
        <name>S-adenosyl-L-methionine</name>
        <dbReference type="ChEBI" id="CHEBI:59789"/>
    </ligand>
</feature>
<proteinExistence type="inferred from homology"/>
<keyword id="KW-0963">Cytoplasm</keyword>
<keyword id="KW-0489">Methyltransferase</keyword>
<keyword id="KW-1185">Reference proteome</keyword>
<keyword id="KW-0698">rRNA processing</keyword>
<keyword id="KW-0949">S-adenosyl-L-methionine</keyword>
<keyword id="KW-0808">Transferase</keyword>
<reference key="1">
    <citation type="submission" date="2003-10" db="EMBL/GenBank/DDBJ databases">
        <title>The complete genome sequence of the alkaliphilic Bacillus clausii KSM-K16.</title>
        <authorList>
            <person name="Takaki Y."/>
            <person name="Kageyama Y."/>
            <person name="Shimamura S."/>
            <person name="Suzuki H."/>
            <person name="Nishi S."/>
            <person name="Hatada Y."/>
            <person name="Kawai S."/>
            <person name="Ito S."/>
            <person name="Horikoshi K."/>
        </authorList>
    </citation>
    <scope>NUCLEOTIDE SEQUENCE [LARGE SCALE GENOMIC DNA]</scope>
    <source>
        <strain>KSM-K16</strain>
    </source>
</reference>
<evidence type="ECO:0000255" key="1">
    <source>
        <dbReference type="HAMAP-Rule" id="MF_00658"/>
    </source>
</evidence>
<protein>
    <recommendedName>
        <fullName evidence="1">Ribosomal RNA large subunit methyltransferase H</fullName>
        <ecNumber evidence="1">2.1.1.177</ecNumber>
    </recommendedName>
    <alternativeName>
        <fullName evidence="1">23S rRNA (pseudouridine1915-N3)-methyltransferase</fullName>
    </alternativeName>
    <alternativeName>
        <fullName evidence="1">23S rRNA m3Psi1915 methyltransferase</fullName>
    </alternativeName>
    <alternativeName>
        <fullName evidence="1">rRNA (pseudouridine-N3-)-methyltransferase RlmH</fullName>
    </alternativeName>
</protein>
<sequence>MNITILSVGKLKEKYIKQGIDEYKKRLSAYAKIQEIEVPDEKAPEHLSTEDMRLVKKKEGERLLAKISADSYVIALAIEGNMKTSEQLAKNIEQLGTYGKSKIAFIIGGSLGLSNDVYARADELLSFSKMTFPHQLMKLVLFEQLYRSFRIMRGEPYHK</sequence>
<gene>
    <name evidence="1" type="primary">rlmH</name>
    <name type="ordered locus">ABC4093</name>
</gene>